<evidence type="ECO:0000250" key="1"/>
<evidence type="ECO:0000250" key="2">
    <source>
        <dbReference type="UniProtKB" id="G5BQH5"/>
    </source>
</evidence>
<evidence type="ECO:0000250" key="3">
    <source>
        <dbReference type="UniProtKB" id="P02647"/>
    </source>
</evidence>
<evidence type="ECO:0000250" key="4">
    <source>
        <dbReference type="UniProtKB" id="P02648"/>
    </source>
</evidence>
<evidence type="ECO:0000250" key="5">
    <source>
        <dbReference type="UniProtKB" id="P04639"/>
    </source>
</evidence>
<evidence type="ECO:0000255" key="6"/>
<evidence type="ECO:0000305" key="7"/>
<name>APOA1_ACIJB</name>
<reference key="1">
    <citation type="submission" date="2018-10" db="EMBL/GenBank/DDBJ databases">
        <title>Linked reads assembly of the African cheetah.</title>
        <authorList>
            <person name="Scott A."/>
            <person name="Pukazhenthi B."/>
            <person name="Koepfli K.-P."/>
            <person name="Mohr D."/>
            <person name="Crosier A."/>
            <person name="O'Brien S.J."/>
            <person name="Tamazian G."/>
            <person name="Dobrynin P."/>
            <person name="Komissarov A."/>
            <person name="Kliver S."/>
            <person name="Krasheninnikova K."/>
        </authorList>
    </citation>
    <scope>NUCLEOTIDE SEQUENCE [LARGE SCALE GENOMIC DNA]</scope>
</reference>
<reference key="2">
    <citation type="unpublished observations" date="2019-06">
        <authorList>
            <person name="Puppione D.L."/>
        </authorList>
    </citation>
    <scope>IDENTIFICATION</scope>
</reference>
<protein>
    <recommendedName>
        <fullName>Apolipoprotein A-I</fullName>
        <shortName>Apo-AI</shortName>
        <shortName>ApoA-I</shortName>
    </recommendedName>
    <alternativeName>
        <fullName>Apolipoprotein A1</fullName>
    </alternativeName>
    <component>
        <recommendedName>
            <fullName>Proapolipoprotein A-I</fullName>
            <shortName>ProapoA-I</shortName>
        </recommendedName>
    </component>
    <component>
        <recommendedName>
            <fullName>Truncated apolipoprotein A-I</fullName>
        </recommendedName>
    </component>
</protein>
<gene>
    <name type="primary">APOA1</name>
</gene>
<sequence>MKAVVLTLAVLFLTGSQARHFWQQDDPQSPWDRVKDLVTVYVDAVKDGGREYVAQFEASALGKQLNLKLLDNWDTLGSTVTKLREQIGPVTQEFWDNLEKETEVLRQEMSKDLEEVKQKVQPYLDDFQKKWQEEVELYRQKVAPLGTELREGARQKLQELHEKLSPLGEELRDRARTHVDALRAQLAPYSDELRERLAARLQALKESGGASLAEYHAKASEHLSTLSEKAKPALEDLRQGLLPVLESFKVGLMAIVDEATKKLNAQ</sequence>
<feature type="signal peptide" evidence="6">
    <location>
        <begin position="1"/>
        <end position="18"/>
    </location>
</feature>
<feature type="chain" id="PRO_0000440137" description="Proapolipoprotein A-I">
    <location>
        <begin position="19"/>
        <end position="266"/>
    </location>
</feature>
<feature type="chain" id="PRO_0000440138" description="Apolipoprotein A-I">
    <location>
        <begin position="25"/>
        <end position="266"/>
    </location>
</feature>
<feature type="chain" id="PRO_0000440139" description="Truncated apolipoprotein A-I">
    <location>
        <begin position="25"/>
        <end position="265"/>
    </location>
</feature>
<feature type="repeat" description="1">
    <location>
        <begin position="67"/>
        <end position="88"/>
    </location>
</feature>
<feature type="repeat" description="2">
    <location>
        <begin position="89"/>
        <end position="110"/>
    </location>
</feature>
<feature type="repeat" description="3; half-length">
    <location>
        <begin position="111"/>
        <end position="121"/>
    </location>
</feature>
<feature type="repeat" description="4">
    <location>
        <begin position="122"/>
        <end position="143"/>
    </location>
</feature>
<feature type="repeat" description="5">
    <location>
        <begin position="144"/>
        <end position="165"/>
    </location>
</feature>
<feature type="repeat" description="6">
    <location>
        <begin position="166"/>
        <end position="187"/>
    </location>
</feature>
<feature type="repeat" description="7">
    <location>
        <begin position="188"/>
        <end position="209"/>
    </location>
</feature>
<feature type="repeat" description="8">
    <location>
        <begin position="210"/>
        <end position="231"/>
    </location>
</feature>
<feature type="repeat" description="9; half-length">
    <location>
        <begin position="232"/>
        <end position="242"/>
    </location>
</feature>
<feature type="repeat" description="10">
    <location>
        <begin position="243"/>
        <end position="266"/>
    </location>
</feature>
<feature type="region of interest" description="10 X approximate tandem repeats">
    <location>
        <begin position="67"/>
        <end position="266"/>
    </location>
</feature>
<feature type="modified residue" description="Methionine sulfoxide" evidence="3">
    <location>
        <position position="109"/>
    </location>
</feature>
<dbReference type="EMBL" id="QURD01003265">
    <property type="status" value="NOT_ANNOTATED_CDS"/>
    <property type="molecule type" value="Genomic_DNA"/>
</dbReference>
<dbReference type="RefSeq" id="XP_026892393.1">
    <property type="nucleotide sequence ID" value="XM_027036592.2"/>
</dbReference>
<dbReference type="SMR" id="P0DP49"/>
<dbReference type="GeneID" id="106966535"/>
<dbReference type="Proteomes" id="UP000504626">
    <property type="component" value="Unplaced"/>
</dbReference>
<dbReference type="GO" id="GO:0042627">
    <property type="term" value="C:chylomicron"/>
    <property type="evidence" value="ECO:0007669"/>
    <property type="project" value="TreeGrafter"/>
</dbReference>
<dbReference type="GO" id="GO:1903561">
    <property type="term" value="C:extracellular vesicle"/>
    <property type="evidence" value="ECO:0007669"/>
    <property type="project" value="TreeGrafter"/>
</dbReference>
<dbReference type="GO" id="GO:0034364">
    <property type="term" value="C:high-density lipoprotein particle"/>
    <property type="evidence" value="ECO:0007669"/>
    <property type="project" value="UniProtKB-KW"/>
</dbReference>
<dbReference type="GO" id="GO:0034362">
    <property type="term" value="C:low-density lipoprotein particle"/>
    <property type="evidence" value="ECO:0007669"/>
    <property type="project" value="TreeGrafter"/>
</dbReference>
<dbReference type="GO" id="GO:0034361">
    <property type="term" value="C:very-low-density lipoprotein particle"/>
    <property type="evidence" value="ECO:0007669"/>
    <property type="project" value="TreeGrafter"/>
</dbReference>
<dbReference type="GO" id="GO:0120020">
    <property type="term" value="F:cholesterol transfer activity"/>
    <property type="evidence" value="ECO:0007669"/>
    <property type="project" value="TreeGrafter"/>
</dbReference>
<dbReference type="GO" id="GO:0060228">
    <property type="term" value="F:phosphatidylcholine-sterol O-acyltransferase activator activity"/>
    <property type="evidence" value="ECO:0007669"/>
    <property type="project" value="TreeGrafter"/>
</dbReference>
<dbReference type="GO" id="GO:0005543">
    <property type="term" value="F:phospholipid binding"/>
    <property type="evidence" value="ECO:0007669"/>
    <property type="project" value="TreeGrafter"/>
</dbReference>
<dbReference type="GO" id="GO:0042803">
    <property type="term" value="F:protein homodimerization activity"/>
    <property type="evidence" value="ECO:0000250"/>
    <property type="project" value="UniProtKB"/>
</dbReference>
<dbReference type="GO" id="GO:0055090">
    <property type="term" value="P:acylglycerol homeostasis"/>
    <property type="evidence" value="ECO:0007669"/>
    <property type="project" value="TreeGrafter"/>
</dbReference>
<dbReference type="GO" id="GO:0033344">
    <property type="term" value="P:cholesterol efflux"/>
    <property type="evidence" value="ECO:0007669"/>
    <property type="project" value="TreeGrafter"/>
</dbReference>
<dbReference type="GO" id="GO:0008203">
    <property type="term" value="P:cholesterol metabolic process"/>
    <property type="evidence" value="ECO:0007669"/>
    <property type="project" value="UniProtKB-KW"/>
</dbReference>
<dbReference type="GO" id="GO:0042157">
    <property type="term" value="P:lipoprotein metabolic process"/>
    <property type="evidence" value="ECO:0007669"/>
    <property type="project" value="InterPro"/>
</dbReference>
<dbReference type="GO" id="GO:0033700">
    <property type="term" value="P:phospholipid efflux"/>
    <property type="evidence" value="ECO:0007669"/>
    <property type="project" value="TreeGrafter"/>
</dbReference>
<dbReference type="GO" id="GO:0010875">
    <property type="term" value="P:positive regulation of cholesterol efflux"/>
    <property type="evidence" value="ECO:0000250"/>
    <property type="project" value="UniProtKB"/>
</dbReference>
<dbReference type="GO" id="GO:0050766">
    <property type="term" value="P:positive regulation of phagocytosis"/>
    <property type="evidence" value="ECO:0000250"/>
    <property type="project" value="UniProtKB"/>
</dbReference>
<dbReference type="GO" id="GO:1902995">
    <property type="term" value="P:positive regulation of phospholipid efflux"/>
    <property type="evidence" value="ECO:0000250"/>
    <property type="project" value="UniProtKB"/>
</dbReference>
<dbReference type="GO" id="GO:0050821">
    <property type="term" value="P:protein stabilization"/>
    <property type="evidence" value="ECO:0000250"/>
    <property type="project" value="UniProtKB"/>
</dbReference>
<dbReference type="FunFam" id="1.20.120.20:FF:000001">
    <property type="entry name" value="Apolipoprotein A-I"/>
    <property type="match status" value="1"/>
</dbReference>
<dbReference type="FunFam" id="1.20.5.20:FF:000001">
    <property type="entry name" value="apolipoprotein A-I"/>
    <property type="match status" value="1"/>
</dbReference>
<dbReference type="Gene3D" id="1.20.5.20">
    <property type="match status" value="1"/>
</dbReference>
<dbReference type="Gene3D" id="6.10.140.380">
    <property type="match status" value="1"/>
</dbReference>
<dbReference type="Gene3D" id="1.20.120.20">
    <property type="entry name" value="Apolipoprotein"/>
    <property type="match status" value="1"/>
</dbReference>
<dbReference type="InterPro" id="IPR000074">
    <property type="entry name" value="ApoA_E"/>
</dbReference>
<dbReference type="InterPro" id="IPR050163">
    <property type="entry name" value="Apolipoprotein_A1/A4/E"/>
</dbReference>
<dbReference type="PANTHER" id="PTHR18976">
    <property type="entry name" value="APOLIPOPROTEIN"/>
    <property type="match status" value="1"/>
</dbReference>
<dbReference type="PANTHER" id="PTHR18976:SF11">
    <property type="entry name" value="APOLIPOPROTEIN A-I"/>
    <property type="match status" value="1"/>
</dbReference>
<dbReference type="Pfam" id="PF01442">
    <property type="entry name" value="Apolipoprotein"/>
    <property type="match status" value="1"/>
</dbReference>
<dbReference type="SUPFAM" id="SSF58113">
    <property type="entry name" value="Apolipoprotein A-I"/>
    <property type="match status" value="1"/>
</dbReference>
<accession>P0DP49</accession>
<comment type="function">
    <text evidence="3">Participates in the reverse transport of cholesterol from tissues to the liver for excretion by promoting cholesterol efflux from tissues and by acting as a cofactor for the lecithin cholesterol acyltransferase (LCAT). As part of the SPAP complex, activates spermatozoa motility.</text>
</comment>
<comment type="subunit">
    <text evidence="2 3 5">Homodimer (By similarity). Interacts with APOA1BP and CLU. Component of a sperm activating protein complex (SPAP), consisting of APOA1, an immunoglobulin heavy chain, an immunoglobulin light chain and albumin. Interacts with NDRG1. Interacts with SCGB3A2 (By similarity). Interacts with NAXE and YJEFN3 (By similarity).</text>
</comment>
<comment type="subcellular location">
    <subcellularLocation>
        <location evidence="3">Secreted</location>
    </subcellularLocation>
</comment>
<comment type="PTM">
    <text evidence="4">Glycosylated.</text>
</comment>
<comment type="PTM">
    <text evidence="4">Palmitoylated.</text>
</comment>
<comment type="PTM">
    <text evidence="1">Phosphorylation sites are present in the extracellular medium.</text>
</comment>
<comment type="similarity">
    <text evidence="7">Belongs to the apolipoprotein A1/A4/E family.</text>
</comment>
<keyword id="KW-0153">Cholesterol metabolism</keyword>
<keyword id="KW-0325">Glycoprotein</keyword>
<keyword id="KW-0345">HDL</keyword>
<keyword id="KW-0443">Lipid metabolism</keyword>
<keyword id="KW-0445">Lipid transport</keyword>
<keyword id="KW-0449">Lipoprotein</keyword>
<keyword id="KW-0558">Oxidation</keyword>
<keyword id="KW-0564">Palmitate</keyword>
<keyword id="KW-0597">Phosphoprotein</keyword>
<keyword id="KW-1185">Reference proteome</keyword>
<keyword id="KW-0677">Repeat</keyword>
<keyword id="KW-0964">Secreted</keyword>
<keyword id="KW-0732">Signal</keyword>
<keyword id="KW-0753">Steroid metabolism</keyword>
<keyword id="KW-1207">Sterol metabolism</keyword>
<keyword id="KW-0813">Transport</keyword>
<proteinExistence type="inferred from homology"/>
<organism>
    <name type="scientific">Acinonyx jubatus</name>
    <name type="common">Cheetah</name>
    <dbReference type="NCBI Taxonomy" id="32536"/>
    <lineage>
        <taxon>Eukaryota</taxon>
        <taxon>Metazoa</taxon>
        <taxon>Chordata</taxon>
        <taxon>Craniata</taxon>
        <taxon>Vertebrata</taxon>
        <taxon>Euteleostomi</taxon>
        <taxon>Mammalia</taxon>
        <taxon>Eutheria</taxon>
        <taxon>Laurasiatheria</taxon>
        <taxon>Carnivora</taxon>
        <taxon>Feliformia</taxon>
        <taxon>Felidae</taxon>
        <taxon>Felinae</taxon>
        <taxon>Acinonyx</taxon>
    </lineage>
</organism>